<organism>
    <name type="scientific">Conus imperialis</name>
    <name type="common">Imperial cone</name>
    <dbReference type="NCBI Taxonomy" id="35631"/>
    <lineage>
        <taxon>Eukaryota</taxon>
        <taxon>Metazoa</taxon>
        <taxon>Spiralia</taxon>
        <taxon>Lophotrochozoa</taxon>
        <taxon>Mollusca</taxon>
        <taxon>Gastropoda</taxon>
        <taxon>Caenogastropoda</taxon>
        <taxon>Neogastropoda</taxon>
        <taxon>Conoidea</taxon>
        <taxon>Conidae</taxon>
        <taxon>Conus</taxon>
        <taxon>Stephanoconus</taxon>
    </lineage>
</organism>
<proteinExistence type="inferred from homology"/>
<name>CKN3_CONIM</name>
<dbReference type="EMBL" id="FJ375240">
    <property type="protein sequence ID" value="ACQ66000.1"/>
    <property type="molecule type" value="mRNA"/>
</dbReference>
<dbReference type="SMR" id="D0PX86"/>
<dbReference type="TCDB" id="8.B.39.1.1">
    <property type="family name" value="the conotoxin k (cotxj) family"/>
</dbReference>
<dbReference type="GO" id="GO:0005576">
    <property type="term" value="C:extracellular region"/>
    <property type="evidence" value="ECO:0007669"/>
    <property type="project" value="UniProtKB-SubCell"/>
</dbReference>
<dbReference type="GO" id="GO:0090729">
    <property type="term" value="F:toxin activity"/>
    <property type="evidence" value="ECO:0007669"/>
    <property type="project" value="UniProtKB-KW"/>
</dbReference>
<dbReference type="Gene3D" id="1.10.10.2920">
    <property type="match status" value="1"/>
</dbReference>
<protein>
    <recommendedName>
        <fullName evidence="3">Conotoxin Im23.3</fullName>
    </recommendedName>
</protein>
<feature type="signal peptide" evidence="2">
    <location>
        <begin position="1"/>
        <end position="22"/>
    </location>
</feature>
<feature type="propeptide" id="PRO_0000417045" evidence="4">
    <location>
        <begin position="23"/>
        <end position="28"/>
    </location>
</feature>
<feature type="chain" id="PRO_0000417128" description="Conotoxin Im23.3" evidence="4">
    <location>
        <begin position="31"/>
        <end position="70"/>
    </location>
</feature>
<feature type="disulfide bond" evidence="1">
    <location>
        <begin position="34"/>
        <end position="41"/>
    </location>
</feature>
<feature type="disulfide bond" evidence="1">
    <location>
        <begin position="45"/>
        <end position="53"/>
    </location>
</feature>
<feature type="disulfide bond" evidence="1">
    <location>
        <begin position="54"/>
        <end position="69"/>
    </location>
</feature>
<keyword id="KW-0165">Cleavage on pair of basic residues</keyword>
<keyword id="KW-1015">Disulfide bond</keyword>
<keyword id="KW-0528">Neurotoxin</keyword>
<keyword id="KW-0964">Secreted</keyword>
<keyword id="KW-0732">Signal</keyword>
<keyword id="KW-0800">Toxin</keyword>
<comment type="function">
    <text evidence="1">Neurotoxin that induces excitatory symptoms in mice following intracranial administration. No symptoms are observed after intraperitoneal and intravenous (tail vein) injections (By similarity).</text>
</comment>
<comment type="subcellular location">
    <subcellularLocation>
        <location evidence="5">Secreted</location>
    </subcellularLocation>
</comment>
<comment type="tissue specificity">
    <text evidence="5">Expressed by the venom duct.</text>
</comment>
<comment type="domain">
    <text evidence="4">The cysteine framework is XXIII (C-C-C-CC-C).</text>
</comment>
<comment type="similarity">
    <text evidence="4">Belongs to the conotoxin K superfamily.</text>
</comment>
<evidence type="ECO:0000250" key="1">
    <source>
        <dbReference type="UniProtKB" id="D0PX84"/>
    </source>
</evidence>
<evidence type="ECO:0000255" key="2"/>
<evidence type="ECO:0000303" key="3">
    <source>
    </source>
</evidence>
<evidence type="ECO:0000305" key="4"/>
<evidence type="ECO:0000305" key="5">
    <source>
    </source>
</evidence>
<reference key="1">
    <citation type="journal article" date="2012" name="J. Biol. Chem.">
        <title>A helical conotoxin from Conus imperialis has a novel cysteine framework and defines a new superfamily.</title>
        <authorList>
            <person name="Ye M."/>
            <person name="Khoo K.K."/>
            <person name="Xu S."/>
            <person name="Zhou M."/>
            <person name="Boonyalai N."/>
            <person name="Perugini M.A."/>
            <person name="Shao X."/>
            <person name="Chi C."/>
            <person name="Galea C.A."/>
            <person name="Wang C."/>
            <person name="Norton R.S."/>
        </authorList>
    </citation>
    <scope>NUCLEOTIDE SEQUENCE [MRNA]</scope>
    <scope>NOMENCLATURE</scope>
    <source>
        <tissue>Venom duct</tissue>
    </source>
</reference>
<sequence length="70" mass="7825">MIMRMTLTLFVLVVMTAASASGDALTEAKRIPYCGQTGAECYSWCKEQHLIRCCDFVKYVGMNPPADKCR</sequence>
<accession>D0PX86</accession>